<proteinExistence type="evidence at protein level"/>
<evidence type="ECO:0000250" key="1"/>
<evidence type="ECO:0000269" key="2">
    <source>
    </source>
</evidence>
<evidence type="ECO:0000305" key="3"/>
<protein>
    <recommendedName>
        <fullName>Nucleoside diphosphate kinase III, chloroplastic/mitochondrial</fullName>
        <shortName>NDK III</shortName>
        <shortName>NDP kinase III</shortName>
        <shortName>NDPK III</shortName>
        <ecNumber>2.7.4.6</ecNumber>
    </recommendedName>
</protein>
<gene>
    <name type="primary">NDPK3</name>
    <name type="ordered locus">At4g11010</name>
    <name type="ORF">F25I24.220</name>
    <name type="ORF">F8M12.12</name>
</gene>
<organism>
    <name type="scientific">Arabidopsis thaliana</name>
    <name type="common">Mouse-ear cress</name>
    <dbReference type="NCBI Taxonomy" id="3702"/>
    <lineage>
        <taxon>Eukaryota</taxon>
        <taxon>Viridiplantae</taxon>
        <taxon>Streptophyta</taxon>
        <taxon>Embryophyta</taxon>
        <taxon>Tracheophyta</taxon>
        <taxon>Spermatophyta</taxon>
        <taxon>Magnoliopsida</taxon>
        <taxon>eudicotyledons</taxon>
        <taxon>Gunneridae</taxon>
        <taxon>Pentapetalae</taxon>
        <taxon>rosids</taxon>
        <taxon>malvids</taxon>
        <taxon>Brassicales</taxon>
        <taxon>Brassicaceae</taxon>
        <taxon>Camelineae</taxon>
        <taxon>Arabidopsis</taxon>
    </lineage>
</organism>
<keyword id="KW-0067">ATP-binding</keyword>
<keyword id="KW-0150">Chloroplast</keyword>
<keyword id="KW-0903">Direct protein sequencing</keyword>
<keyword id="KW-0418">Kinase</keyword>
<keyword id="KW-0460">Magnesium</keyword>
<keyword id="KW-0479">Metal-binding</keyword>
<keyword id="KW-0496">Mitochondrion</keyword>
<keyword id="KW-0546">Nucleotide metabolism</keyword>
<keyword id="KW-0547">Nucleotide-binding</keyword>
<keyword id="KW-0934">Plastid</keyword>
<keyword id="KW-1185">Reference proteome</keyword>
<keyword id="KW-0793">Thylakoid</keyword>
<keyword id="KW-0808">Transferase</keyword>
<keyword id="KW-0809">Transit peptide</keyword>
<name>NDK3_ARATH</name>
<sequence length="238" mass="25734">MSSQICRSASKAAKSLLSSAKNARFFSEGRAIGAAAAVSASGKIPLYASNFARSSGSGVASKSWITGLLALPAAAYMIQDQEVLAAEMERTFIAIKPDGVQRGLISEIISRFERKGFKLVGIKVIVPSKDFAQKHYHDLKERPFFNGLCDFLSSGPVIAMVWEGDGVIRYGRKLIGATDPQKSEPGTIRGDLAVTVGRNIIHGSDGPETAKDEISLWFKPQELVSYTSNSEKWLYGDN</sequence>
<reference key="1">
    <citation type="journal article" date="2004" name="Proc. Natl. Acad. Sci. U.S.A.">
        <title>Multiple evidence for nucleotide metabolism in the chloroplast thylakoid lumen.</title>
        <authorList>
            <person name="Spetea C."/>
            <person name="Hundal T."/>
            <person name="Lundin B."/>
            <person name="Heddad M."/>
            <person name="Adamska I."/>
            <person name="Andersson B."/>
        </authorList>
    </citation>
    <scope>NUCLEOTIDE SEQUENCE [MRNA]</scope>
    <scope>SUBCELLULAR LOCATION</scope>
    <scope>CHARACTERIZATION</scope>
    <source>
        <strain>cv. Columbia</strain>
    </source>
</reference>
<reference key="2">
    <citation type="submission" date="1998-01" db="EMBL/GenBank/DDBJ databases">
        <authorList>
            <person name="Lee J."/>
            <person name="Song P.-S."/>
            <person name="Hahn T.R."/>
            <person name="Choi G."/>
        </authorList>
    </citation>
    <scope>NUCLEOTIDE SEQUENCE [GENOMIC DNA]</scope>
    <source>
        <strain>cv. Columbia</strain>
    </source>
</reference>
<reference key="3">
    <citation type="journal article" date="1999" name="Nature">
        <title>Sequence and analysis of chromosome 4 of the plant Arabidopsis thaliana.</title>
        <authorList>
            <person name="Mayer K.F.X."/>
            <person name="Schueller C."/>
            <person name="Wambutt R."/>
            <person name="Murphy G."/>
            <person name="Volckaert G."/>
            <person name="Pohl T."/>
            <person name="Duesterhoeft A."/>
            <person name="Stiekema W."/>
            <person name="Entian K.-D."/>
            <person name="Terryn N."/>
            <person name="Harris B."/>
            <person name="Ansorge W."/>
            <person name="Brandt P."/>
            <person name="Grivell L.A."/>
            <person name="Rieger M."/>
            <person name="Weichselgartner M."/>
            <person name="de Simone V."/>
            <person name="Obermaier B."/>
            <person name="Mache R."/>
            <person name="Mueller M."/>
            <person name="Kreis M."/>
            <person name="Delseny M."/>
            <person name="Puigdomenech P."/>
            <person name="Watson M."/>
            <person name="Schmidtheini T."/>
            <person name="Reichert B."/>
            <person name="Portetelle D."/>
            <person name="Perez-Alonso M."/>
            <person name="Boutry M."/>
            <person name="Bancroft I."/>
            <person name="Vos P."/>
            <person name="Hoheisel J."/>
            <person name="Zimmermann W."/>
            <person name="Wedler H."/>
            <person name="Ridley P."/>
            <person name="Langham S.-A."/>
            <person name="McCullagh B."/>
            <person name="Bilham L."/>
            <person name="Robben J."/>
            <person name="van der Schueren J."/>
            <person name="Grymonprez B."/>
            <person name="Chuang Y.-J."/>
            <person name="Vandenbussche F."/>
            <person name="Braeken M."/>
            <person name="Weltjens I."/>
            <person name="Voet M."/>
            <person name="Bastiaens I."/>
            <person name="Aert R."/>
            <person name="Defoor E."/>
            <person name="Weitzenegger T."/>
            <person name="Bothe G."/>
            <person name="Ramsperger U."/>
            <person name="Hilbert H."/>
            <person name="Braun M."/>
            <person name="Holzer E."/>
            <person name="Brandt A."/>
            <person name="Peters S."/>
            <person name="van Staveren M."/>
            <person name="Dirkse W."/>
            <person name="Mooijman P."/>
            <person name="Klein Lankhorst R."/>
            <person name="Rose M."/>
            <person name="Hauf J."/>
            <person name="Koetter P."/>
            <person name="Berneiser S."/>
            <person name="Hempel S."/>
            <person name="Feldpausch M."/>
            <person name="Lamberth S."/>
            <person name="Van den Daele H."/>
            <person name="De Keyser A."/>
            <person name="Buysshaert C."/>
            <person name="Gielen J."/>
            <person name="Villarroel R."/>
            <person name="De Clercq R."/>
            <person name="van Montagu M."/>
            <person name="Rogers J."/>
            <person name="Cronin A."/>
            <person name="Quail M.A."/>
            <person name="Bray-Allen S."/>
            <person name="Clark L."/>
            <person name="Doggett J."/>
            <person name="Hall S."/>
            <person name="Kay M."/>
            <person name="Lennard N."/>
            <person name="McLay K."/>
            <person name="Mayes R."/>
            <person name="Pettett A."/>
            <person name="Rajandream M.A."/>
            <person name="Lyne M."/>
            <person name="Benes V."/>
            <person name="Rechmann S."/>
            <person name="Borkova D."/>
            <person name="Bloecker H."/>
            <person name="Scharfe M."/>
            <person name="Grimm M."/>
            <person name="Loehnert T.-H."/>
            <person name="Dose S."/>
            <person name="de Haan M."/>
            <person name="Maarse A.C."/>
            <person name="Schaefer M."/>
            <person name="Mueller-Auer S."/>
            <person name="Gabel C."/>
            <person name="Fuchs M."/>
            <person name="Fartmann B."/>
            <person name="Granderath K."/>
            <person name="Dauner D."/>
            <person name="Herzl A."/>
            <person name="Neumann S."/>
            <person name="Argiriou A."/>
            <person name="Vitale D."/>
            <person name="Liguori R."/>
            <person name="Piravandi E."/>
            <person name="Massenet O."/>
            <person name="Quigley F."/>
            <person name="Clabauld G."/>
            <person name="Muendlein A."/>
            <person name="Felber R."/>
            <person name="Schnabl S."/>
            <person name="Hiller R."/>
            <person name="Schmidt W."/>
            <person name="Lecharny A."/>
            <person name="Aubourg S."/>
            <person name="Chefdor F."/>
            <person name="Cooke R."/>
            <person name="Berger C."/>
            <person name="Monfort A."/>
            <person name="Casacuberta E."/>
            <person name="Gibbons T."/>
            <person name="Weber N."/>
            <person name="Vandenbol M."/>
            <person name="Bargues M."/>
            <person name="Terol J."/>
            <person name="Torres A."/>
            <person name="Perez-Perez A."/>
            <person name="Purnelle B."/>
            <person name="Bent E."/>
            <person name="Johnson S."/>
            <person name="Tacon D."/>
            <person name="Jesse T."/>
            <person name="Heijnen L."/>
            <person name="Schwarz S."/>
            <person name="Scholler P."/>
            <person name="Heber S."/>
            <person name="Francs P."/>
            <person name="Bielke C."/>
            <person name="Frishman D."/>
            <person name="Haase D."/>
            <person name="Lemcke K."/>
            <person name="Mewes H.-W."/>
            <person name="Stocker S."/>
            <person name="Zaccaria P."/>
            <person name="Bevan M."/>
            <person name="Wilson R.K."/>
            <person name="de la Bastide M."/>
            <person name="Habermann K."/>
            <person name="Parnell L."/>
            <person name="Dedhia N."/>
            <person name="Gnoj L."/>
            <person name="Schutz K."/>
            <person name="Huang E."/>
            <person name="Spiegel L."/>
            <person name="Sekhon M."/>
            <person name="Murray J."/>
            <person name="Sheet P."/>
            <person name="Cordes M."/>
            <person name="Abu-Threideh J."/>
            <person name="Stoneking T."/>
            <person name="Kalicki J."/>
            <person name="Graves T."/>
            <person name="Harmon G."/>
            <person name="Edwards J."/>
            <person name="Latreille P."/>
            <person name="Courtney L."/>
            <person name="Cloud J."/>
            <person name="Abbott A."/>
            <person name="Scott K."/>
            <person name="Johnson D."/>
            <person name="Minx P."/>
            <person name="Bentley D."/>
            <person name="Fulton B."/>
            <person name="Miller N."/>
            <person name="Greco T."/>
            <person name="Kemp K."/>
            <person name="Kramer J."/>
            <person name="Fulton L."/>
            <person name="Mardis E."/>
            <person name="Dante M."/>
            <person name="Pepin K."/>
            <person name="Hillier L.W."/>
            <person name="Nelson J."/>
            <person name="Spieth J."/>
            <person name="Ryan E."/>
            <person name="Andrews S."/>
            <person name="Geisel C."/>
            <person name="Layman D."/>
            <person name="Du H."/>
            <person name="Ali J."/>
            <person name="Berghoff A."/>
            <person name="Jones K."/>
            <person name="Drone K."/>
            <person name="Cotton M."/>
            <person name="Joshu C."/>
            <person name="Antonoiu B."/>
            <person name="Zidanic M."/>
            <person name="Strong C."/>
            <person name="Sun H."/>
            <person name="Lamar B."/>
            <person name="Yordan C."/>
            <person name="Ma P."/>
            <person name="Zhong J."/>
            <person name="Preston R."/>
            <person name="Vil D."/>
            <person name="Shekher M."/>
            <person name="Matero A."/>
            <person name="Shah R."/>
            <person name="Swaby I.K."/>
            <person name="O'Shaughnessy A."/>
            <person name="Rodriguez M."/>
            <person name="Hoffman J."/>
            <person name="Till S."/>
            <person name="Granat S."/>
            <person name="Shohdy N."/>
            <person name="Hasegawa A."/>
            <person name="Hameed A."/>
            <person name="Lodhi M."/>
            <person name="Johnson A."/>
            <person name="Chen E."/>
            <person name="Marra M.A."/>
            <person name="Martienssen R."/>
            <person name="McCombie W.R."/>
        </authorList>
    </citation>
    <scope>NUCLEOTIDE SEQUENCE [LARGE SCALE GENOMIC DNA]</scope>
    <source>
        <strain>cv. Columbia</strain>
    </source>
</reference>
<reference key="4">
    <citation type="journal article" date="2017" name="Plant J.">
        <title>Araport11: a complete reannotation of the Arabidopsis thaliana reference genome.</title>
        <authorList>
            <person name="Cheng C.Y."/>
            <person name="Krishnakumar V."/>
            <person name="Chan A.P."/>
            <person name="Thibaud-Nissen F."/>
            <person name="Schobel S."/>
            <person name="Town C.D."/>
        </authorList>
    </citation>
    <scope>GENOME REANNOTATION</scope>
    <source>
        <strain>cv. Columbia</strain>
    </source>
</reference>
<reference key="5">
    <citation type="journal article" date="2003" name="Science">
        <title>Empirical analysis of transcriptional activity in the Arabidopsis genome.</title>
        <authorList>
            <person name="Yamada K."/>
            <person name="Lim J."/>
            <person name="Dale J.M."/>
            <person name="Chen H."/>
            <person name="Shinn P."/>
            <person name="Palm C.J."/>
            <person name="Southwick A.M."/>
            <person name="Wu H.C."/>
            <person name="Kim C.J."/>
            <person name="Nguyen M."/>
            <person name="Pham P.K."/>
            <person name="Cheuk R.F."/>
            <person name="Karlin-Newmann G."/>
            <person name="Liu S.X."/>
            <person name="Lam B."/>
            <person name="Sakano H."/>
            <person name="Wu T."/>
            <person name="Yu G."/>
            <person name="Miranda M."/>
            <person name="Quach H.L."/>
            <person name="Tripp M."/>
            <person name="Chang C.H."/>
            <person name="Lee J.M."/>
            <person name="Toriumi M.J."/>
            <person name="Chan M.M."/>
            <person name="Tang C.C."/>
            <person name="Onodera C.S."/>
            <person name="Deng J.M."/>
            <person name="Akiyama K."/>
            <person name="Ansari Y."/>
            <person name="Arakawa T."/>
            <person name="Banh J."/>
            <person name="Banno F."/>
            <person name="Bowser L."/>
            <person name="Brooks S.Y."/>
            <person name="Carninci P."/>
            <person name="Chao Q."/>
            <person name="Choy N."/>
            <person name="Enju A."/>
            <person name="Goldsmith A.D."/>
            <person name="Gurjal M."/>
            <person name="Hansen N.F."/>
            <person name="Hayashizaki Y."/>
            <person name="Johnson-Hopson C."/>
            <person name="Hsuan V.W."/>
            <person name="Iida K."/>
            <person name="Karnes M."/>
            <person name="Khan S."/>
            <person name="Koesema E."/>
            <person name="Ishida J."/>
            <person name="Jiang P.X."/>
            <person name="Jones T."/>
            <person name="Kawai J."/>
            <person name="Kamiya A."/>
            <person name="Meyers C."/>
            <person name="Nakajima M."/>
            <person name="Narusaka M."/>
            <person name="Seki M."/>
            <person name="Sakurai T."/>
            <person name="Satou M."/>
            <person name="Tamse R."/>
            <person name="Vaysberg M."/>
            <person name="Wallender E.K."/>
            <person name="Wong C."/>
            <person name="Yamamura Y."/>
            <person name="Yuan S."/>
            <person name="Shinozaki K."/>
            <person name="Davis R.W."/>
            <person name="Theologis A."/>
            <person name="Ecker J.R."/>
        </authorList>
    </citation>
    <scope>NUCLEOTIDE SEQUENCE [LARGE SCALE MRNA]</scope>
    <source>
        <strain>cv. Columbia</strain>
    </source>
</reference>
<reference key="6">
    <citation type="journal article" date="2001" name="Plant Physiol.">
        <title>Proteomic approach to identify novel mitochondrial proteins in Arabidopsis.</title>
        <authorList>
            <person name="Kruft V."/>
            <person name="Eubel H."/>
            <person name="Jaensch L."/>
            <person name="Werhahn W."/>
            <person name="Braun H.-P."/>
        </authorList>
    </citation>
    <scope>PROTEIN SEQUENCE OF 86-103 AND 122-135</scope>
    <scope>SUBCELLULAR LOCATION</scope>
    <source>
        <tissue>Leaf</tissue>
        <tissue>Stem</tissue>
    </source>
</reference>
<reference key="7">
    <citation type="journal article" date="2004" name="Plant Cell">
        <title>Experimental analysis of the Arabidopsis mitochondrial proteome highlights signaling and regulatory components, provides assessment of targeting prediction programs, and indicates plant-specific mitochondrial proteins.</title>
        <authorList>
            <person name="Heazlewood J.L."/>
            <person name="Tonti-Filippini J.S."/>
            <person name="Gout A.M."/>
            <person name="Day D.A."/>
            <person name="Whelan J."/>
            <person name="Millar A.H."/>
        </authorList>
    </citation>
    <scope>IDENTIFICATION BY MASS SPECTROMETRY</scope>
    <scope>SUBCELLULAR LOCATION [LARGE SCALE ANALYSIS]</scope>
    <source>
        <strain>cv. Landsberg erecta</strain>
    </source>
</reference>
<feature type="transit peptide" description="Chloroplast and mitochondrion" evidence="2">
    <location>
        <begin position="1"/>
        <end position="85"/>
    </location>
</feature>
<feature type="chain" id="PRO_0000019435" description="Nucleoside diphosphate kinase III, chloroplastic/mitochondrial">
    <location>
        <begin position="86"/>
        <end position="238"/>
    </location>
</feature>
<feature type="active site" description="Pros-phosphohistidine intermediate" evidence="1">
    <location>
        <position position="202"/>
    </location>
</feature>
<feature type="binding site" evidence="1">
    <location>
        <position position="96"/>
    </location>
    <ligand>
        <name>ATP</name>
        <dbReference type="ChEBI" id="CHEBI:30616"/>
    </ligand>
</feature>
<feature type="binding site" evidence="1">
    <location>
        <position position="144"/>
    </location>
    <ligand>
        <name>ATP</name>
        <dbReference type="ChEBI" id="CHEBI:30616"/>
    </ligand>
</feature>
<feature type="binding site" evidence="1">
    <location>
        <position position="172"/>
    </location>
    <ligand>
        <name>ATP</name>
        <dbReference type="ChEBI" id="CHEBI:30616"/>
    </ligand>
</feature>
<feature type="binding site" evidence="1">
    <location>
        <position position="178"/>
    </location>
    <ligand>
        <name>ATP</name>
        <dbReference type="ChEBI" id="CHEBI:30616"/>
    </ligand>
</feature>
<feature type="binding site" evidence="1">
    <location>
        <position position="189"/>
    </location>
    <ligand>
        <name>ATP</name>
        <dbReference type="ChEBI" id="CHEBI:30616"/>
    </ligand>
</feature>
<feature type="binding site" evidence="1">
    <location>
        <position position="199"/>
    </location>
    <ligand>
        <name>ATP</name>
        <dbReference type="ChEBI" id="CHEBI:30616"/>
    </ligand>
</feature>
<comment type="function">
    <text evidence="1">Major role in the synthesis of nucleoside triphosphates other than ATP. The ATP gamma phosphate is transferred to the NDP beta phosphate via a ping-pong mechanism, using a phosphorylated active-site intermediate. Shows the highest specificity towards GDP (By similarity).</text>
</comment>
<comment type="catalytic activity">
    <reaction>
        <text>a 2'-deoxyribonucleoside 5'-diphosphate + ATP = a 2'-deoxyribonucleoside 5'-triphosphate + ADP</text>
        <dbReference type="Rhea" id="RHEA:44640"/>
        <dbReference type="ChEBI" id="CHEBI:30616"/>
        <dbReference type="ChEBI" id="CHEBI:61560"/>
        <dbReference type="ChEBI" id="CHEBI:73316"/>
        <dbReference type="ChEBI" id="CHEBI:456216"/>
        <dbReference type="EC" id="2.7.4.6"/>
    </reaction>
</comment>
<comment type="catalytic activity">
    <reaction>
        <text>a ribonucleoside 5'-diphosphate + ATP = a ribonucleoside 5'-triphosphate + ADP</text>
        <dbReference type="Rhea" id="RHEA:18113"/>
        <dbReference type="ChEBI" id="CHEBI:30616"/>
        <dbReference type="ChEBI" id="CHEBI:57930"/>
        <dbReference type="ChEBI" id="CHEBI:61557"/>
        <dbReference type="ChEBI" id="CHEBI:456216"/>
        <dbReference type="EC" id="2.7.4.6"/>
    </reaction>
</comment>
<comment type="cofactor">
    <cofactor evidence="1">
        <name>Mg(2+)</name>
        <dbReference type="ChEBI" id="CHEBI:18420"/>
    </cofactor>
</comment>
<comment type="subunit">
    <text evidence="3">Homohexamer.</text>
</comment>
<comment type="subcellular location">
    <subcellularLocation>
        <location>Plastid</location>
        <location>Chloroplast thylakoid lumen</location>
    </subcellularLocation>
    <subcellularLocation>
        <location>Mitochondrion intermembrane space</location>
    </subcellularLocation>
</comment>
<comment type="similarity">
    <text evidence="3">Belongs to the NDK family.</text>
</comment>
<comment type="caution">
    <text evidence="3">PubMed:14736920 demonstrates a thylakoid lumen location, while PubMed:14671022 shows a mitochondrial location.</text>
</comment>
<dbReference type="EC" id="2.7.4.6"/>
<dbReference type="EMBL" id="AF044265">
    <property type="protein sequence ID" value="AAC00512.1"/>
    <property type="molecule type" value="mRNA"/>
</dbReference>
<dbReference type="EMBL" id="AF080118">
    <property type="protein sequence ID" value="AAC33956.1"/>
    <property type="molecule type" value="Genomic_DNA"/>
</dbReference>
<dbReference type="EMBL" id="AL049525">
    <property type="protein sequence ID" value="CAB40069.1"/>
    <property type="molecule type" value="Genomic_DNA"/>
</dbReference>
<dbReference type="EMBL" id="AL161518">
    <property type="protein sequence ID" value="CAB81202.1"/>
    <property type="molecule type" value="Genomic_DNA"/>
</dbReference>
<dbReference type="EMBL" id="CP002687">
    <property type="protein sequence ID" value="AEE82961.1"/>
    <property type="molecule type" value="Genomic_DNA"/>
</dbReference>
<dbReference type="EMBL" id="AY062964">
    <property type="protein sequence ID" value="AAL33810.1"/>
    <property type="molecule type" value="mRNA"/>
</dbReference>
<dbReference type="EMBL" id="AY035184">
    <property type="protein sequence ID" value="AAK59688.1"/>
    <property type="molecule type" value="mRNA"/>
</dbReference>
<dbReference type="PIR" id="T01877">
    <property type="entry name" value="T01877"/>
</dbReference>
<dbReference type="RefSeq" id="NP_192839.1">
    <property type="nucleotide sequence ID" value="NM_117171.4"/>
</dbReference>
<dbReference type="SMR" id="O49203"/>
<dbReference type="BioGRID" id="12001">
    <property type="interactions" value="2"/>
</dbReference>
<dbReference type="FunCoup" id="O49203">
    <property type="interactions" value="2324"/>
</dbReference>
<dbReference type="STRING" id="3702.O49203"/>
<dbReference type="iPTMnet" id="O49203"/>
<dbReference type="PaxDb" id="3702-AT4G11010.1"/>
<dbReference type="ProteomicsDB" id="251166"/>
<dbReference type="EnsemblPlants" id="AT4G11010.1">
    <property type="protein sequence ID" value="AT4G11010.1"/>
    <property type="gene ID" value="AT4G11010"/>
</dbReference>
<dbReference type="GeneID" id="826702"/>
<dbReference type="Gramene" id="AT4G11010.1">
    <property type="protein sequence ID" value="AT4G11010.1"/>
    <property type="gene ID" value="AT4G11010"/>
</dbReference>
<dbReference type="KEGG" id="ath:AT4G11010"/>
<dbReference type="Araport" id="AT4G11010"/>
<dbReference type="TAIR" id="AT4G11010">
    <property type="gene designation" value="NDPK3"/>
</dbReference>
<dbReference type="eggNOG" id="KOG0888">
    <property type="taxonomic scope" value="Eukaryota"/>
</dbReference>
<dbReference type="HOGENOM" id="CLU_060216_5_0_1"/>
<dbReference type="InParanoid" id="O49203"/>
<dbReference type="OMA" id="HVFQSGW"/>
<dbReference type="OrthoDB" id="2162449at2759"/>
<dbReference type="PhylomeDB" id="O49203"/>
<dbReference type="BioCyc" id="ARA:AT4G11010-MONOMER"/>
<dbReference type="BRENDA" id="2.7.4.6">
    <property type="organism ID" value="399"/>
</dbReference>
<dbReference type="PRO" id="PR:O49203"/>
<dbReference type="Proteomes" id="UP000006548">
    <property type="component" value="Chromosome 4"/>
</dbReference>
<dbReference type="ExpressionAtlas" id="O49203">
    <property type="expression patterns" value="baseline and differential"/>
</dbReference>
<dbReference type="GO" id="GO:0009543">
    <property type="term" value="C:chloroplast thylakoid lumen"/>
    <property type="evidence" value="ECO:0007669"/>
    <property type="project" value="UniProtKB-SubCell"/>
</dbReference>
<dbReference type="GO" id="GO:0005829">
    <property type="term" value="C:cytosol"/>
    <property type="evidence" value="ECO:0007005"/>
    <property type="project" value="TAIR"/>
</dbReference>
<dbReference type="GO" id="GO:0005743">
    <property type="term" value="C:mitochondrial inner membrane"/>
    <property type="evidence" value="ECO:0000314"/>
    <property type="project" value="TAIR"/>
</dbReference>
<dbReference type="GO" id="GO:0005758">
    <property type="term" value="C:mitochondrial intermembrane space"/>
    <property type="evidence" value="ECO:0007669"/>
    <property type="project" value="UniProtKB-SubCell"/>
</dbReference>
<dbReference type="GO" id="GO:0005739">
    <property type="term" value="C:mitochondrion"/>
    <property type="evidence" value="ECO:0000314"/>
    <property type="project" value="TAIR"/>
</dbReference>
<dbReference type="GO" id="GO:0005524">
    <property type="term" value="F:ATP binding"/>
    <property type="evidence" value="ECO:0007669"/>
    <property type="project" value="UniProtKB-KW"/>
</dbReference>
<dbReference type="GO" id="GO:0050897">
    <property type="term" value="F:cobalt ion binding"/>
    <property type="evidence" value="ECO:0007005"/>
    <property type="project" value="TAIR"/>
</dbReference>
<dbReference type="GO" id="GO:0004550">
    <property type="term" value="F:nucleoside diphosphate kinase activity"/>
    <property type="evidence" value="ECO:0007669"/>
    <property type="project" value="UniProtKB-EC"/>
</dbReference>
<dbReference type="GO" id="GO:0008270">
    <property type="term" value="F:zinc ion binding"/>
    <property type="evidence" value="ECO:0007005"/>
    <property type="project" value="TAIR"/>
</dbReference>
<dbReference type="GO" id="GO:0006241">
    <property type="term" value="P:CTP biosynthetic process"/>
    <property type="evidence" value="ECO:0007669"/>
    <property type="project" value="InterPro"/>
</dbReference>
<dbReference type="GO" id="GO:0006183">
    <property type="term" value="P:GTP biosynthetic process"/>
    <property type="evidence" value="ECO:0007669"/>
    <property type="project" value="InterPro"/>
</dbReference>
<dbReference type="GO" id="GO:0006228">
    <property type="term" value="P:UTP biosynthetic process"/>
    <property type="evidence" value="ECO:0007669"/>
    <property type="project" value="InterPro"/>
</dbReference>
<dbReference type="CDD" id="cd04413">
    <property type="entry name" value="NDPk_I"/>
    <property type="match status" value="1"/>
</dbReference>
<dbReference type="FunFam" id="3.30.70.141:FF:000005">
    <property type="entry name" value="Nucleoside diphosphate kinase"/>
    <property type="match status" value="1"/>
</dbReference>
<dbReference type="Gene3D" id="3.30.70.141">
    <property type="entry name" value="Nucleoside diphosphate kinase-like domain"/>
    <property type="match status" value="1"/>
</dbReference>
<dbReference type="HAMAP" id="MF_00451">
    <property type="entry name" value="NDP_kinase"/>
    <property type="match status" value="1"/>
</dbReference>
<dbReference type="InterPro" id="IPR034907">
    <property type="entry name" value="NDK-like_dom"/>
</dbReference>
<dbReference type="InterPro" id="IPR036850">
    <property type="entry name" value="NDK-like_dom_sf"/>
</dbReference>
<dbReference type="InterPro" id="IPR001564">
    <property type="entry name" value="Nucleoside_diP_kinase"/>
</dbReference>
<dbReference type="InterPro" id="IPR023005">
    <property type="entry name" value="Nucleoside_diP_kinase_AS"/>
</dbReference>
<dbReference type="NCBIfam" id="NF001908">
    <property type="entry name" value="PRK00668.1"/>
    <property type="match status" value="1"/>
</dbReference>
<dbReference type="PANTHER" id="PTHR11349">
    <property type="entry name" value="NUCLEOSIDE DIPHOSPHATE KINASE"/>
    <property type="match status" value="1"/>
</dbReference>
<dbReference type="Pfam" id="PF00334">
    <property type="entry name" value="NDK"/>
    <property type="match status" value="1"/>
</dbReference>
<dbReference type="PRINTS" id="PR01243">
    <property type="entry name" value="NUCDPKINASE"/>
</dbReference>
<dbReference type="SMART" id="SM00562">
    <property type="entry name" value="NDK"/>
    <property type="match status" value="1"/>
</dbReference>
<dbReference type="SUPFAM" id="SSF54919">
    <property type="entry name" value="Nucleoside diphosphate kinase, NDK"/>
    <property type="match status" value="1"/>
</dbReference>
<dbReference type="PROSITE" id="PS00469">
    <property type="entry name" value="NDPK"/>
    <property type="match status" value="1"/>
</dbReference>
<dbReference type="PROSITE" id="PS51374">
    <property type="entry name" value="NDPK_LIKE"/>
    <property type="match status" value="1"/>
</dbReference>
<accession>O49203</accession>